<proteinExistence type="evidence at transcript level"/>
<reference key="1">
    <citation type="journal article" date="1998" name="Endocr. Res.">
        <title>Isolation of an ovine genomic sequence containing the full-length angiotensin II type-1 receptor.</title>
        <authorList>
            <person name="Millican D.S."/>
            <person name="Bird I.M."/>
        </authorList>
    </citation>
    <scope>NUCLEOTIDE SEQUENCE [GENOMIC DNA]</scope>
</reference>
<reference key="2">
    <citation type="journal article" date="1998" name="Biol. Reprod.">
        <title>Specific pregnancy-induced angiotensin II type-1 receptor expression in ovine uterine artery does not involve formation of alternate splice variants or alternate promoter usage.</title>
        <authorList>
            <person name="Bird I.M."/>
            <person name="Millican D.S."/>
            <person name="Magness R.R."/>
        </authorList>
    </citation>
    <scope>NUCLEOTIDE SEQUENCE [MRNA] OF 1-132</scope>
    <source>
        <tissue>Adrenal cortex</tissue>
    </source>
</reference>
<dbReference type="EMBL" id="AF069750">
    <property type="protein sequence ID" value="AAC99344.1"/>
    <property type="molecule type" value="Genomic_DNA"/>
</dbReference>
<dbReference type="EMBL" id="AF056308">
    <property type="protein sequence ID" value="AAC32613.1"/>
    <property type="molecule type" value="mRNA"/>
</dbReference>
<dbReference type="SMR" id="O77590"/>
<dbReference type="STRING" id="9940.ENSOARP00000016502"/>
<dbReference type="GlyCosmos" id="O77590">
    <property type="glycosylation" value="3 sites, No reported glycans"/>
</dbReference>
<dbReference type="PaxDb" id="9940-ENSOARP00000016502"/>
<dbReference type="eggNOG" id="KOG3656">
    <property type="taxonomic scope" value="Eukaryota"/>
</dbReference>
<dbReference type="Proteomes" id="UP000002356">
    <property type="component" value="Unplaced"/>
</dbReference>
<dbReference type="GO" id="GO:0009897">
    <property type="term" value="C:external side of plasma membrane"/>
    <property type="evidence" value="ECO:0007669"/>
    <property type="project" value="TreeGrafter"/>
</dbReference>
<dbReference type="GO" id="GO:0001596">
    <property type="term" value="F:angiotensin type I receptor activity"/>
    <property type="evidence" value="ECO:0000250"/>
    <property type="project" value="UniProtKB"/>
</dbReference>
<dbReference type="GO" id="GO:0004945">
    <property type="term" value="F:angiotensin type II receptor activity"/>
    <property type="evidence" value="ECO:0007669"/>
    <property type="project" value="InterPro"/>
</dbReference>
<dbReference type="GO" id="GO:0019957">
    <property type="term" value="F:C-C chemokine binding"/>
    <property type="evidence" value="ECO:0007669"/>
    <property type="project" value="TreeGrafter"/>
</dbReference>
<dbReference type="GO" id="GO:0016493">
    <property type="term" value="F:C-C chemokine receptor activity"/>
    <property type="evidence" value="ECO:0007669"/>
    <property type="project" value="TreeGrafter"/>
</dbReference>
<dbReference type="GO" id="GO:0019722">
    <property type="term" value="P:calcium-mediated signaling"/>
    <property type="evidence" value="ECO:0007669"/>
    <property type="project" value="TreeGrafter"/>
</dbReference>
<dbReference type="GO" id="GO:0006955">
    <property type="term" value="P:immune response"/>
    <property type="evidence" value="ECO:0007669"/>
    <property type="project" value="TreeGrafter"/>
</dbReference>
<dbReference type="GO" id="GO:0002034">
    <property type="term" value="P:maintenance of blood vessel diameter homeostasis by renin-angiotensin"/>
    <property type="evidence" value="ECO:0000250"/>
    <property type="project" value="UniProtKB"/>
</dbReference>
<dbReference type="GO" id="GO:0030593">
    <property type="term" value="P:neutrophil chemotaxis"/>
    <property type="evidence" value="ECO:0007669"/>
    <property type="project" value="TreeGrafter"/>
</dbReference>
<dbReference type="GO" id="GO:0007204">
    <property type="term" value="P:positive regulation of cytosolic calcium ion concentration"/>
    <property type="evidence" value="ECO:0007669"/>
    <property type="project" value="TreeGrafter"/>
</dbReference>
<dbReference type="GO" id="GO:0019229">
    <property type="term" value="P:regulation of vasoconstriction"/>
    <property type="evidence" value="ECO:0007669"/>
    <property type="project" value="InterPro"/>
</dbReference>
<dbReference type="CDD" id="cd15192">
    <property type="entry name" value="7tmA_AT1R"/>
    <property type="match status" value="1"/>
</dbReference>
<dbReference type="FunFam" id="1.20.1070.10:FF:000088">
    <property type="entry name" value="Angiotensin II receptor type 1"/>
    <property type="match status" value="1"/>
</dbReference>
<dbReference type="Gene3D" id="1.20.1070.10">
    <property type="entry name" value="Rhodopsin 7-helix transmembrane proteins"/>
    <property type="match status" value="1"/>
</dbReference>
<dbReference type="InterPro" id="IPR000190">
    <property type="entry name" value="ATII_AT1_rcpt"/>
</dbReference>
<dbReference type="InterPro" id="IPR000248">
    <property type="entry name" value="ATII_rcpt"/>
</dbReference>
<dbReference type="InterPro" id="IPR050119">
    <property type="entry name" value="CCR1-9-like"/>
</dbReference>
<dbReference type="InterPro" id="IPR000276">
    <property type="entry name" value="GPCR_Rhodpsn"/>
</dbReference>
<dbReference type="InterPro" id="IPR017452">
    <property type="entry name" value="GPCR_Rhodpsn_7TM"/>
</dbReference>
<dbReference type="PANTHER" id="PTHR10489">
    <property type="entry name" value="CELL ADHESION MOLECULE"/>
    <property type="match status" value="1"/>
</dbReference>
<dbReference type="PANTHER" id="PTHR10489:SF956">
    <property type="entry name" value="TYPE-1 ANGIOTENSIN II RECEPTOR A"/>
    <property type="match status" value="1"/>
</dbReference>
<dbReference type="Pfam" id="PF00001">
    <property type="entry name" value="7tm_1"/>
    <property type="match status" value="1"/>
</dbReference>
<dbReference type="PRINTS" id="PR00241">
    <property type="entry name" value="ANGIOTENSINR"/>
</dbReference>
<dbReference type="PRINTS" id="PR00635">
    <property type="entry name" value="ANGIOTENSN1R"/>
</dbReference>
<dbReference type="PRINTS" id="PR00237">
    <property type="entry name" value="GPCRRHODOPSN"/>
</dbReference>
<dbReference type="SMART" id="SM01381">
    <property type="entry name" value="7TM_GPCR_Srsx"/>
    <property type="match status" value="1"/>
</dbReference>
<dbReference type="SUPFAM" id="SSF81321">
    <property type="entry name" value="Family A G protein-coupled receptor-like"/>
    <property type="match status" value="1"/>
</dbReference>
<dbReference type="PROSITE" id="PS00237">
    <property type="entry name" value="G_PROTEIN_RECEP_F1_1"/>
    <property type="match status" value="1"/>
</dbReference>
<dbReference type="PROSITE" id="PS50262">
    <property type="entry name" value="G_PROTEIN_RECEP_F1_2"/>
    <property type="match status" value="1"/>
</dbReference>
<protein>
    <recommendedName>
        <fullName>Type-1 angiotensin II receptor</fullName>
    </recommendedName>
    <alternativeName>
        <fullName>Angiotensin II type-1 receptor</fullName>
        <shortName>AT1 receptor</shortName>
    </alternativeName>
</protein>
<gene>
    <name type="primary">AGTR1</name>
</gene>
<sequence>MILNSSTEDGIKRIQDDCPKAGRHNYIFIMIPTLYSIIFVVGLFGNSLVVIVIYFYMKLKTVASVFLLNLALADLCFLLTLPLWAVYTAMEYRWPFGNYLCKIASGSVSFNLYASVFLLTCLSIDRYLAIVHPMKSRLRRTMLVAKVTCIIIWLLAGLASLPTIIHRNVFFIENTNITVCAFHYESQNSTLPVGLGLTKNILGFLFPFLIILTSYTLIWKTLKKAYEIQKNKPRKDDIFKIILAIVLFFFFSWVPHQIFTFMDVLIQLGLIRDCKIEDIVDTAMPITICLAYFNNCLNPPFYGFLGKKFKKYFLQLLKYIPPKAKSHSNLSTKMSTLSYRPSENGNSSTKKPAPCTEVE</sequence>
<keyword id="KW-1003">Cell membrane</keyword>
<keyword id="KW-1015">Disulfide bond</keyword>
<keyword id="KW-0297">G-protein coupled receptor</keyword>
<keyword id="KW-0325">Glycoprotein</keyword>
<keyword id="KW-0449">Lipoprotein</keyword>
<keyword id="KW-0472">Membrane</keyword>
<keyword id="KW-0564">Palmitate</keyword>
<keyword id="KW-0597">Phosphoprotein</keyword>
<keyword id="KW-0675">Receptor</keyword>
<keyword id="KW-1185">Reference proteome</keyword>
<keyword id="KW-0807">Transducer</keyword>
<keyword id="KW-0812">Transmembrane</keyword>
<keyword id="KW-1133">Transmembrane helix</keyword>
<name>AGTR1_SHEEP</name>
<feature type="chain" id="PRO_0000069162" description="Type-1 angiotensin II receptor">
    <location>
        <begin position="1"/>
        <end position="359"/>
    </location>
</feature>
<feature type="topological domain" description="Extracellular" evidence="2">
    <location>
        <begin position="1"/>
        <end position="25"/>
    </location>
</feature>
<feature type="transmembrane region" description="Helical; Name=1" evidence="2">
    <location>
        <begin position="26"/>
        <end position="55"/>
    </location>
</feature>
<feature type="topological domain" description="Cytoplasmic" evidence="2">
    <location>
        <begin position="56"/>
        <end position="61"/>
    </location>
</feature>
<feature type="transmembrane region" description="Helical; Name=2" evidence="2">
    <location>
        <begin position="62"/>
        <end position="89"/>
    </location>
</feature>
<feature type="topological domain" description="Extracellular" evidence="2">
    <location>
        <begin position="90"/>
        <end position="98"/>
    </location>
</feature>
<feature type="transmembrane region" description="Helical; Name=3" evidence="2">
    <location>
        <begin position="99"/>
        <end position="125"/>
    </location>
</feature>
<feature type="topological domain" description="Cytoplasmic" evidence="2">
    <location>
        <begin position="126"/>
        <end position="141"/>
    </location>
</feature>
<feature type="transmembrane region" description="Helical; Name=4" evidence="2">
    <location>
        <begin position="142"/>
        <end position="165"/>
    </location>
</feature>
<feature type="topological domain" description="Extracellular" evidence="2">
    <location>
        <begin position="166"/>
        <end position="190"/>
    </location>
</feature>
<feature type="transmembrane region" description="Helical; Name=5" evidence="2">
    <location>
        <begin position="191"/>
        <end position="216"/>
    </location>
</feature>
<feature type="topological domain" description="Cytoplasmic" evidence="2">
    <location>
        <begin position="217"/>
        <end position="239"/>
    </location>
</feature>
<feature type="transmembrane region" description="Helical; Name=6" evidence="2">
    <location>
        <begin position="240"/>
        <end position="268"/>
    </location>
</feature>
<feature type="topological domain" description="Extracellular" evidence="2">
    <location>
        <begin position="269"/>
        <end position="278"/>
    </location>
</feature>
<feature type="transmembrane region" description="Helical; Name=7" evidence="2">
    <location>
        <begin position="279"/>
        <end position="304"/>
    </location>
</feature>
<feature type="topological domain" description="Cytoplasmic" evidence="2">
    <location>
        <begin position="305"/>
        <end position="359"/>
    </location>
</feature>
<feature type="region of interest" description="Disordered" evidence="5">
    <location>
        <begin position="335"/>
        <end position="359"/>
    </location>
</feature>
<feature type="compositionally biased region" description="Polar residues" evidence="5">
    <location>
        <begin position="335"/>
        <end position="350"/>
    </location>
</feature>
<feature type="binding site" evidence="2">
    <location>
        <position position="15"/>
    </location>
    <ligand>
        <name>angiotensin II</name>
        <dbReference type="ChEBI" id="CHEBI:58506"/>
    </ligand>
</feature>
<feature type="binding site" evidence="2">
    <location>
        <position position="17"/>
    </location>
    <ligand>
        <name>angiotensin II</name>
        <dbReference type="ChEBI" id="CHEBI:58506"/>
    </ligand>
</feature>
<feature type="binding site" evidence="2">
    <location>
        <position position="167"/>
    </location>
    <ligand>
        <name>angiotensin II</name>
        <dbReference type="ChEBI" id="CHEBI:58506"/>
    </ligand>
</feature>
<feature type="binding site" evidence="2">
    <location>
        <position position="182"/>
    </location>
    <ligand>
        <name>angiotensin II</name>
        <dbReference type="ChEBI" id="CHEBI:58506"/>
    </ligand>
</feature>
<feature type="binding site" evidence="2">
    <location>
        <position position="183"/>
    </location>
    <ligand>
        <name>angiotensin II</name>
        <dbReference type="ChEBI" id="CHEBI:58506"/>
    </ligand>
</feature>
<feature type="binding site" evidence="2">
    <location>
        <position position="184"/>
    </location>
    <ligand>
        <name>angiotensin II</name>
        <dbReference type="ChEBI" id="CHEBI:58506"/>
    </ligand>
</feature>
<feature type="binding site" evidence="2">
    <location>
        <position position="199"/>
    </location>
    <ligand>
        <name>angiotensin II</name>
        <dbReference type="ChEBI" id="CHEBI:58506"/>
    </ligand>
</feature>
<feature type="lipid moiety-binding region" description="S-palmitoyl cysteine" evidence="3">
    <location>
        <position position="355"/>
    </location>
</feature>
<feature type="glycosylation site" description="N-linked (GlcNAc...) asparagine" evidence="3">
    <location>
        <position position="4"/>
    </location>
</feature>
<feature type="glycosylation site" description="N-linked (GlcNAc...) asparagine" evidence="3">
    <location>
        <position position="176"/>
    </location>
</feature>
<feature type="glycosylation site" description="N-linked (GlcNAc...) asparagine" evidence="3">
    <location>
        <position position="188"/>
    </location>
</feature>
<feature type="disulfide bond" evidence="2">
    <location>
        <begin position="18"/>
        <end position="274"/>
    </location>
</feature>
<feature type="disulfide bond" evidence="4">
    <location>
        <begin position="101"/>
        <end position="180"/>
    </location>
</feature>
<organism>
    <name type="scientific">Ovis aries</name>
    <name type="common">Sheep</name>
    <dbReference type="NCBI Taxonomy" id="9940"/>
    <lineage>
        <taxon>Eukaryota</taxon>
        <taxon>Metazoa</taxon>
        <taxon>Chordata</taxon>
        <taxon>Craniata</taxon>
        <taxon>Vertebrata</taxon>
        <taxon>Euteleostomi</taxon>
        <taxon>Mammalia</taxon>
        <taxon>Eutheria</taxon>
        <taxon>Laurasiatheria</taxon>
        <taxon>Artiodactyla</taxon>
        <taxon>Ruminantia</taxon>
        <taxon>Pecora</taxon>
        <taxon>Bovidae</taxon>
        <taxon>Caprinae</taxon>
        <taxon>Ovis</taxon>
    </lineage>
</organism>
<accession>O77590</accession>
<comment type="function">
    <text evidence="2">Receptor for angiotensin II, a vasoconstricting peptide, which acts as a key regulator of blood pressure and sodium retention by the kidney. The activated receptor in turn couples to G-alpha proteins G(q) (GNAQ, GNA11, GNA14 or GNA15) and thus activates phospholipase C and increases the cytosolic Ca(2+) concentrations, which in turn triggers cellular responses such as stimulation of protein kinase C.</text>
</comment>
<comment type="subunit">
    <text evidence="1 2">Interacts with MAS1 (By similarity). Interacts with ARRB1 (By similarity). Interacts with FLNA (via filamin repeat 21); increases PKA-mediated phosphorylation of FLNA (By similarity).</text>
</comment>
<comment type="subcellular location">
    <subcellularLocation>
        <location evidence="2">Cell membrane</location>
        <topology evidence="2">Multi-pass membrane protein</topology>
    </subcellularLocation>
</comment>
<comment type="PTM">
    <text evidence="2">C-terminal Ser or Thr residues may be phosphorylated.</text>
</comment>
<comment type="similarity">
    <text evidence="4">Belongs to the G-protein coupled receptor 1 family.</text>
</comment>
<evidence type="ECO:0000250" key="1">
    <source>
        <dbReference type="UniProtKB" id="P25095"/>
    </source>
</evidence>
<evidence type="ECO:0000250" key="2">
    <source>
        <dbReference type="UniProtKB" id="P30556"/>
    </source>
</evidence>
<evidence type="ECO:0000255" key="3"/>
<evidence type="ECO:0000255" key="4">
    <source>
        <dbReference type="PROSITE-ProRule" id="PRU00521"/>
    </source>
</evidence>
<evidence type="ECO:0000256" key="5">
    <source>
        <dbReference type="SAM" id="MobiDB-lite"/>
    </source>
</evidence>